<evidence type="ECO:0000255" key="1">
    <source>
        <dbReference type="HAMAP-Rule" id="MF_00080"/>
    </source>
</evidence>
<reference key="1">
    <citation type="submission" date="2008-01" db="EMBL/GenBank/DDBJ databases">
        <title>Complete sequence of chromosome of Caulobacter sp. K31.</title>
        <authorList>
            <consortium name="US DOE Joint Genome Institute"/>
            <person name="Copeland A."/>
            <person name="Lucas S."/>
            <person name="Lapidus A."/>
            <person name="Barry K."/>
            <person name="Glavina del Rio T."/>
            <person name="Dalin E."/>
            <person name="Tice H."/>
            <person name="Pitluck S."/>
            <person name="Bruce D."/>
            <person name="Goodwin L."/>
            <person name="Thompson L.S."/>
            <person name="Brettin T."/>
            <person name="Detter J.C."/>
            <person name="Han C."/>
            <person name="Schmutz J."/>
            <person name="Larimer F."/>
            <person name="Land M."/>
            <person name="Hauser L."/>
            <person name="Kyrpides N."/>
            <person name="Kim E."/>
            <person name="Stephens C."/>
            <person name="Richardson P."/>
        </authorList>
    </citation>
    <scope>NUCLEOTIDE SEQUENCE [LARGE SCALE GENOMIC DNA]</scope>
    <source>
        <strain>K31</strain>
    </source>
</reference>
<gene>
    <name evidence="1" type="primary">infC</name>
    <name type="ordered locus">Caul_1196</name>
</gene>
<sequence length="173" mass="20011">MQTPPVKDGPRINEDIRVPRVLLIDHNGEKQGEMPISAALEAAEEAGLDLVEIVPNANPPVCKILDYGKFKFQEQKKKNEARKRQKIVELKEIKLRPNIDIHDYDVKAKSMHRFFEEGDKVKVTLRFRGREMAHPELGMKLLLKVKADFDEIAKVEYEPRMEGRQMIMILAPR</sequence>
<comment type="function">
    <text evidence="1">IF-3 binds to the 30S ribosomal subunit and shifts the equilibrium between 70S ribosomes and their 50S and 30S subunits in favor of the free subunits, thus enhancing the availability of 30S subunits on which protein synthesis initiation begins.</text>
</comment>
<comment type="subunit">
    <text evidence="1">Monomer.</text>
</comment>
<comment type="subcellular location">
    <subcellularLocation>
        <location evidence="1">Cytoplasm</location>
    </subcellularLocation>
</comment>
<comment type="similarity">
    <text evidence="1">Belongs to the IF-3 family.</text>
</comment>
<organism>
    <name type="scientific">Caulobacter sp. (strain K31)</name>
    <dbReference type="NCBI Taxonomy" id="366602"/>
    <lineage>
        <taxon>Bacteria</taxon>
        <taxon>Pseudomonadati</taxon>
        <taxon>Pseudomonadota</taxon>
        <taxon>Alphaproteobacteria</taxon>
        <taxon>Caulobacterales</taxon>
        <taxon>Caulobacteraceae</taxon>
        <taxon>Caulobacter</taxon>
    </lineage>
</organism>
<accession>B0SY03</accession>
<name>IF3_CAUSK</name>
<protein>
    <recommendedName>
        <fullName evidence="1">Translation initiation factor IF-3</fullName>
    </recommendedName>
</protein>
<keyword id="KW-0963">Cytoplasm</keyword>
<keyword id="KW-0396">Initiation factor</keyword>
<keyword id="KW-0648">Protein biosynthesis</keyword>
<proteinExistence type="inferred from homology"/>
<feature type="chain" id="PRO_1000075270" description="Translation initiation factor IF-3">
    <location>
        <begin position="1"/>
        <end position="173"/>
    </location>
</feature>
<dbReference type="EMBL" id="CP000927">
    <property type="protein sequence ID" value="ABZ70326.1"/>
    <property type="molecule type" value="Genomic_DNA"/>
</dbReference>
<dbReference type="SMR" id="B0SY03"/>
<dbReference type="STRING" id="366602.Caul_1196"/>
<dbReference type="KEGG" id="cak:Caul_1196"/>
<dbReference type="eggNOG" id="COG0290">
    <property type="taxonomic scope" value="Bacteria"/>
</dbReference>
<dbReference type="HOGENOM" id="CLU_054919_3_2_5"/>
<dbReference type="OrthoDB" id="9806014at2"/>
<dbReference type="GO" id="GO:0005829">
    <property type="term" value="C:cytosol"/>
    <property type="evidence" value="ECO:0007669"/>
    <property type="project" value="TreeGrafter"/>
</dbReference>
<dbReference type="GO" id="GO:0016020">
    <property type="term" value="C:membrane"/>
    <property type="evidence" value="ECO:0007669"/>
    <property type="project" value="TreeGrafter"/>
</dbReference>
<dbReference type="GO" id="GO:0043022">
    <property type="term" value="F:ribosome binding"/>
    <property type="evidence" value="ECO:0007669"/>
    <property type="project" value="TreeGrafter"/>
</dbReference>
<dbReference type="GO" id="GO:0003743">
    <property type="term" value="F:translation initiation factor activity"/>
    <property type="evidence" value="ECO:0007669"/>
    <property type="project" value="UniProtKB-UniRule"/>
</dbReference>
<dbReference type="GO" id="GO:0032790">
    <property type="term" value="P:ribosome disassembly"/>
    <property type="evidence" value="ECO:0007669"/>
    <property type="project" value="TreeGrafter"/>
</dbReference>
<dbReference type="FunFam" id="3.10.20.80:FF:000001">
    <property type="entry name" value="Translation initiation factor IF-3"/>
    <property type="match status" value="1"/>
</dbReference>
<dbReference type="FunFam" id="3.30.110.10:FF:000001">
    <property type="entry name" value="Translation initiation factor IF-3"/>
    <property type="match status" value="1"/>
</dbReference>
<dbReference type="Gene3D" id="3.30.110.10">
    <property type="entry name" value="Translation initiation factor 3 (IF-3), C-terminal domain"/>
    <property type="match status" value="1"/>
</dbReference>
<dbReference type="Gene3D" id="3.10.20.80">
    <property type="entry name" value="Translation initiation factor 3 (IF-3), N-terminal domain"/>
    <property type="match status" value="1"/>
</dbReference>
<dbReference type="HAMAP" id="MF_00080">
    <property type="entry name" value="IF_3"/>
    <property type="match status" value="1"/>
</dbReference>
<dbReference type="InterPro" id="IPR036788">
    <property type="entry name" value="T_IF-3_C_sf"/>
</dbReference>
<dbReference type="InterPro" id="IPR036787">
    <property type="entry name" value="T_IF-3_N_sf"/>
</dbReference>
<dbReference type="InterPro" id="IPR019813">
    <property type="entry name" value="Translation_initiation_fac3_CS"/>
</dbReference>
<dbReference type="InterPro" id="IPR001288">
    <property type="entry name" value="Translation_initiation_fac_3"/>
</dbReference>
<dbReference type="InterPro" id="IPR019815">
    <property type="entry name" value="Translation_initiation_fac_3_C"/>
</dbReference>
<dbReference type="InterPro" id="IPR019814">
    <property type="entry name" value="Translation_initiation_fac_3_N"/>
</dbReference>
<dbReference type="NCBIfam" id="TIGR00168">
    <property type="entry name" value="infC"/>
    <property type="match status" value="1"/>
</dbReference>
<dbReference type="PANTHER" id="PTHR10938">
    <property type="entry name" value="TRANSLATION INITIATION FACTOR IF-3"/>
    <property type="match status" value="1"/>
</dbReference>
<dbReference type="PANTHER" id="PTHR10938:SF0">
    <property type="entry name" value="TRANSLATION INITIATION FACTOR IF-3, MITOCHONDRIAL"/>
    <property type="match status" value="1"/>
</dbReference>
<dbReference type="Pfam" id="PF00707">
    <property type="entry name" value="IF3_C"/>
    <property type="match status" value="1"/>
</dbReference>
<dbReference type="Pfam" id="PF05198">
    <property type="entry name" value="IF3_N"/>
    <property type="match status" value="1"/>
</dbReference>
<dbReference type="SUPFAM" id="SSF55200">
    <property type="entry name" value="Translation initiation factor IF3, C-terminal domain"/>
    <property type="match status" value="1"/>
</dbReference>
<dbReference type="SUPFAM" id="SSF54364">
    <property type="entry name" value="Translation initiation factor IF3, N-terminal domain"/>
    <property type="match status" value="1"/>
</dbReference>
<dbReference type="PROSITE" id="PS00938">
    <property type="entry name" value="IF3"/>
    <property type="match status" value="1"/>
</dbReference>